<accession>Q6Z0I4</accession>
<accession>A0A0P0XEL9</accession>
<keyword id="KW-0150">Chloroplast</keyword>
<keyword id="KW-0275">Fatty acid biosynthesis</keyword>
<keyword id="KW-0276">Fatty acid metabolism</keyword>
<keyword id="KW-0444">Lipid biosynthesis</keyword>
<keyword id="KW-0443">Lipid metabolism</keyword>
<keyword id="KW-0520">NAD</keyword>
<keyword id="KW-0560">Oxidoreductase</keyword>
<keyword id="KW-0934">Plastid</keyword>
<keyword id="KW-1185">Reference proteome</keyword>
<keyword id="KW-0809">Transit peptide</keyword>
<comment type="function">
    <text evidence="1">Catalyzes the NAD-dependent reduction of a carbon-carbon double bond in an enoyl moiety that is covalently linked to an acyl carrier protein (ACP). Catalyzes the last reduction step in the de novo synthesis cycle of fatty acids. Involved in the elongation cycle of fatty acids which are used in lipid metabolism. Required for normal plant growth (By similarity).</text>
</comment>
<comment type="catalytic activity">
    <reaction>
        <text>a 2,3-saturated acyl-[ACP] + NAD(+) = a (2E)-enoyl-[ACP] + NADH + H(+)</text>
        <dbReference type="Rhea" id="RHEA:10240"/>
        <dbReference type="Rhea" id="RHEA-COMP:9925"/>
        <dbReference type="Rhea" id="RHEA-COMP:9926"/>
        <dbReference type="ChEBI" id="CHEBI:15378"/>
        <dbReference type="ChEBI" id="CHEBI:57540"/>
        <dbReference type="ChEBI" id="CHEBI:57945"/>
        <dbReference type="ChEBI" id="CHEBI:78784"/>
        <dbReference type="ChEBI" id="CHEBI:78785"/>
        <dbReference type="EC" id="1.3.1.9"/>
    </reaction>
</comment>
<comment type="pathway">
    <text>Lipid metabolism; fatty acid biosynthesis.</text>
</comment>
<comment type="subunit">
    <text evidence="1">Homotetramer.</text>
</comment>
<comment type="subcellular location">
    <subcellularLocation>
        <location evidence="3">Plastid</location>
        <location evidence="3">Chloroplast</location>
    </subcellularLocation>
</comment>
<comment type="similarity">
    <text evidence="3">Belongs to the short-chain dehydrogenases/reductases (SDR) family. FabI subfamily.</text>
</comment>
<organism>
    <name type="scientific">Oryza sativa subsp. japonica</name>
    <name type="common">Rice</name>
    <dbReference type="NCBI Taxonomy" id="39947"/>
    <lineage>
        <taxon>Eukaryota</taxon>
        <taxon>Viridiplantae</taxon>
        <taxon>Streptophyta</taxon>
        <taxon>Embryophyta</taxon>
        <taxon>Tracheophyta</taxon>
        <taxon>Spermatophyta</taxon>
        <taxon>Magnoliopsida</taxon>
        <taxon>Liliopsida</taxon>
        <taxon>Poales</taxon>
        <taxon>Poaceae</taxon>
        <taxon>BOP clade</taxon>
        <taxon>Oryzoideae</taxon>
        <taxon>Oryzeae</taxon>
        <taxon>Oryzinae</taxon>
        <taxon>Oryza</taxon>
        <taxon>Oryza sativa</taxon>
    </lineage>
</organism>
<gene>
    <name type="ordered locus">Os08g0327400</name>
    <name type="ordered locus">LOC_Os08g23810</name>
    <name type="ORF">OSJNBa0049I01.2</name>
    <name type="ORF">P0670E08.13</name>
</gene>
<name>FABI1_ORYSJ</name>
<feature type="transit peptide" description="Chloroplast" evidence="2">
    <location>
        <begin position="1"/>
        <end position="67"/>
    </location>
</feature>
<feature type="chain" id="PRO_0000420279" description="Enoyl-[acyl-carrier-protein] reductase [NADH] 1, chloroplastic">
    <location>
        <begin position="68"/>
        <end position="375"/>
    </location>
</feature>
<feature type="active site" description="Proton acceptor" evidence="1">
    <location>
        <position position="254"/>
    </location>
</feature>
<feature type="active site" description="Proton acceptor" evidence="1">
    <location>
        <position position="264"/>
    </location>
</feature>
<feature type="binding site" evidence="1">
    <location>
        <position position="91"/>
    </location>
    <ligand>
        <name>NAD(+)</name>
        <dbReference type="ChEBI" id="CHEBI:57540"/>
    </ligand>
</feature>
<feature type="binding site" evidence="1">
    <location>
        <position position="98"/>
    </location>
    <ligand>
        <name>NAD(+)</name>
        <dbReference type="ChEBI" id="CHEBI:57540"/>
    </ligand>
</feature>
<feature type="binding site" evidence="1">
    <location>
        <begin position="155"/>
        <end position="156"/>
    </location>
    <ligand>
        <name>NAD(+)</name>
        <dbReference type="ChEBI" id="CHEBI:57540"/>
    </ligand>
</feature>
<feature type="binding site" evidence="1">
    <location>
        <begin position="202"/>
        <end position="203"/>
    </location>
    <ligand>
        <name>NAD(+)</name>
        <dbReference type="ChEBI" id="CHEBI:57540"/>
    </ligand>
</feature>
<feature type="binding site" evidence="1">
    <location>
        <position position="252"/>
    </location>
    <ligand>
        <name>NAD(+)</name>
        <dbReference type="ChEBI" id="CHEBI:57540"/>
    </ligand>
</feature>
<feature type="binding site" evidence="1">
    <location>
        <position position="272"/>
    </location>
    <ligand>
        <name>NAD(+)</name>
        <dbReference type="ChEBI" id="CHEBI:57540"/>
    </ligand>
</feature>
<feature type="binding site" evidence="1">
    <location>
        <begin position="302"/>
        <end position="306"/>
    </location>
    <ligand>
        <name>NAD(+)</name>
        <dbReference type="ChEBI" id="CHEBI:57540"/>
    </ligand>
</feature>
<dbReference type="EC" id="1.3.1.9"/>
<dbReference type="EMBL" id="AP004759">
    <property type="protein sequence ID" value="BAD03449.1"/>
    <property type="molecule type" value="Genomic_DNA"/>
</dbReference>
<dbReference type="EMBL" id="AP005490">
    <property type="protein sequence ID" value="BAD03622.1"/>
    <property type="molecule type" value="Genomic_DNA"/>
</dbReference>
<dbReference type="EMBL" id="AP008214">
    <property type="protein sequence ID" value="BAF23471.1"/>
    <property type="molecule type" value="Genomic_DNA"/>
</dbReference>
<dbReference type="EMBL" id="AP014964">
    <property type="protein sequence ID" value="BAT04915.1"/>
    <property type="molecule type" value="Genomic_DNA"/>
</dbReference>
<dbReference type="EMBL" id="AK070992">
    <property type="protein sequence ID" value="BAG92250.1"/>
    <property type="molecule type" value="mRNA"/>
</dbReference>
<dbReference type="RefSeq" id="XP_015648059.1">
    <property type="nucleotide sequence ID" value="XM_015792573.1"/>
</dbReference>
<dbReference type="RefSeq" id="XP_015648060.1">
    <property type="nucleotide sequence ID" value="XM_015792574.1"/>
</dbReference>
<dbReference type="SMR" id="Q6Z0I4"/>
<dbReference type="FunCoup" id="Q6Z0I4">
    <property type="interactions" value="764"/>
</dbReference>
<dbReference type="STRING" id="39947.Q6Z0I4"/>
<dbReference type="PaxDb" id="39947-Q6Z0I4"/>
<dbReference type="EnsemblPlants" id="Os08t0327400-01">
    <property type="protein sequence ID" value="Os08t0327400-01"/>
    <property type="gene ID" value="Os08g0327400"/>
</dbReference>
<dbReference type="Gramene" id="Os08t0327400-01">
    <property type="protein sequence ID" value="Os08t0327400-01"/>
    <property type="gene ID" value="Os08g0327400"/>
</dbReference>
<dbReference type="KEGG" id="dosa:Os08g0327400"/>
<dbReference type="eggNOG" id="KOG0725">
    <property type="taxonomic scope" value="Eukaryota"/>
</dbReference>
<dbReference type="HOGENOM" id="CLU_010194_10_0_1"/>
<dbReference type="InParanoid" id="Q6Z0I4"/>
<dbReference type="OMA" id="GLNIMFG"/>
<dbReference type="OrthoDB" id="417891at2759"/>
<dbReference type="UniPathway" id="UPA00094"/>
<dbReference type="Proteomes" id="UP000000763">
    <property type="component" value="Chromosome 8"/>
</dbReference>
<dbReference type="Proteomes" id="UP000059680">
    <property type="component" value="Chromosome 8"/>
</dbReference>
<dbReference type="GO" id="GO:0009507">
    <property type="term" value="C:chloroplast"/>
    <property type="evidence" value="ECO:0007669"/>
    <property type="project" value="UniProtKB-SubCell"/>
</dbReference>
<dbReference type="GO" id="GO:0004318">
    <property type="term" value="F:enoyl-[acyl-carrier-protein] reductase (NADH) activity"/>
    <property type="evidence" value="ECO:0007669"/>
    <property type="project" value="UniProtKB-EC"/>
</dbReference>
<dbReference type="GO" id="GO:0006633">
    <property type="term" value="P:fatty acid biosynthetic process"/>
    <property type="evidence" value="ECO:0007669"/>
    <property type="project" value="UniProtKB-UniPathway"/>
</dbReference>
<dbReference type="CDD" id="cd05372">
    <property type="entry name" value="ENR_SDR"/>
    <property type="match status" value="1"/>
</dbReference>
<dbReference type="FunFam" id="1.10.8.400:FF:000001">
    <property type="entry name" value="Enoyl-[acyl-carrier-protein] reductase [NADH]"/>
    <property type="match status" value="1"/>
</dbReference>
<dbReference type="FunFam" id="3.40.50.720:FF:000192">
    <property type="entry name" value="Enoyl-[acyl-carrier-protein] reductase [NADH]"/>
    <property type="match status" value="1"/>
</dbReference>
<dbReference type="Gene3D" id="1.10.8.400">
    <property type="entry name" value="Enoyl acyl carrier protein reductase"/>
    <property type="match status" value="1"/>
</dbReference>
<dbReference type="Gene3D" id="3.40.50.720">
    <property type="entry name" value="NAD(P)-binding Rossmann-like Domain"/>
    <property type="match status" value="1"/>
</dbReference>
<dbReference type="InterPro" id="IPR014358">
    <property type="entry name" value="Enoyl-ACP_Rdtase_NADH"/>
</dbReference>
<dbReference type="InterPro" id="IPR036291">
    <property type="entry name" value="NAD(P)-bd_dom_sf"/>
</dbReference>
<dbReference type="InterPro" id="IPR002347">
    <property type="entry name" value="SDR_fam"/>
</dbReference>
<dbReference type="NCBIfam" id="NF004957">
    <property type="entry name" value="PRK06300.1"/>
    <property type="match status" value="1"/>
</dbReference>
<dbReference type="PANTHER" id="PTHR43159">
    <property type="entry name" value="ENOYL-[ACYL-CARRIER-PROTEIN] REDUCTASE"/>
    <property type="match status" value="1"/>
</dbReference>
<dbReference type="PANTHER" id="PTHR43159:SF2">
    <property type="entry name" value="ENOYL-[ACYL-CARRIER-PROTEIN] REDUCTASE [NADH], CHLOROPLASTIC"/>
    <property type="match status" value="1"/>
</dbReference>
<dbReference type="Pfam" id="PF13561">
    <property type="entry name" value="adh_short_C2"/>
    <property type="match status" value="1"/>
</dbReference>
<dbReference type="PRINTS" id="PR00081">
    <property type="entry name" value="GDHRDH"/>
</dbReference>
<dbReference type="SUPFAM" id="SSF51735">
    <property type="entry name" value="NAD(P)-binding Rossmann-fold domains"/>
    <property type="match status" value="1"/>
</dbReference>
<sequence length="375" mass="39131">MGASAATGMQMVAARPCISASQGMLTSRAAVSRIGRALSTTTGFATCPRICYSSPLGSSKRSGVAIRAMSSESGPQGLPIDLRGKRAFIAGVADDNGYGWAIAKALAAAGAEILVGTWVPALNIFETSLRRGKFDESRKLPDGSLMEIVKVYPLDAVYDSPEDVPEDVKGNKRYAGSSNWTVKEVAESVKNDFGSIDILVHSLANGPEVTKPLLETSRRGYLAALSASSYSFVSLLQHFLPIMNPGGASISLTYIASERAIPGYGGGMSSAKAALESDTKVLAFEAGRKGKIRVNTISAGPLGSRAAKAIGFIEKMIEYSYVNAPLQKELLADEVGNTAAFLVSPLASAITGSTVYVDNGLNTMGLAVDSPTISS</sequence>
<proteinExistence type="evidence at transcript level"/>
<evidence type="ECO:0000250" key="1"/>
<evidence type="ECO:0000255" key="2"/>
<evidence type="ECO:0000305" key="3"/>
<reference key="1">
    <citation type="journal article" date="2005" name="Nature">
        <title>The map-based sequence of the rice genome.</title>
        <authorList>
            <consortium name="International rice genome sequencing project (IRGSP)"/>
        </authorList>
    </citation>
    <scope>NUCLEOTIDE SEQUENCE [LARGE SCALE GENOMIC DNA]</scope>
    <source>
        <strain>cv. Nipponbare</strain>
    </source>
</reference>
<reference key="2">
    <citation type="journal article" date="2008" name="Nucleic Acids Res.">
        <title>The rice annotation project database (RAP-DB): 2008 update.</title>
        <authorList>
            <consortium name="The rice annotation project (RAP)"/>
        </authorList>
    </citation>
    <scope>GENOME REANNOTATION</scope>
    <source>
        <strain>cv. Nipponbare</strain>
    </source>
</reference>
<reference key="3">
    <citation type="journal article" date="2013" name="Rice">
        <title>Improvement of the Oryza sativa Nipponbare reference genome using next generation sequence and optical map data.</title>
        <authorList>
            <person name="Kawahara Y."/>
            <person name="de la Bastide M."/>
            <person name="Hamilton J.P."/>
            <person name="Kanamori H."/>
            <person name="McCombie W.R."/>
            <person name="Ouyang S."/>
            <person name="Schwartz D.C."/>
            <person name="Tanaka T."/>
            <person name="Wu J."/>
            <person name="Zhou S."/>
            <person name="Childs K.L."/>
            <person name="Davidson R.M."/>
            <person name="Lin H."/>
            <person name="Quesada-Ocampo L."/>
            <person name="Vaillancourt B."/>
            <person name="Sakai H."/>
            <person name="Lee S.S."/>
            <person name="Kim J."/>
            <person name="Numa H."/>
            <person name="Itoh T."/>
            <person name="Buell C.R."/>
            <person name="Matsumoto T."/>
        </authorList>
    </citation>
    <scope>GENOME REANNOTATION</scope>
    <source>
        <strain>cv. Nipponbare</strain>
    </source>
</reference>
<reference key="4">
    <citation type="journal article" date="2003" name="Science">
        <title>Collection, mapping, and annotation of over 28,000 cDNA clones from japonica rice.</title>
        <authorList>
            <consortium name="The rice full-length cDNA consortium"/>
        </authorList>
    </citation>
    <scope>NUCLEOTIDE SEQUENCE [LARGE SCALE MRNA]</scope>
    <source>
        <strain>cv. Nipponbare</strain>
    </source>
</reference>
<protein>
    <recommendedName>
        <fullName>Enoyl-[acyl-carrier-protein] reductase [NADH] 1, chloroplastic</fullName>
        <shortName>ENR</shortName>
        <ecNumber>1.3.1.9</ecNumber>
    </recommendedName>
    <alternativeName>
        <fullName>NADH-dependent enoyl-ACP reductase</fullName>
    </alternativeName>
</protein>